<comment type="function">
    <text evidence="3 4 5 6">Essential for the invasion of host erythrocytes by blood stage merozoites (PubMed:21909261, PubMed:25583518, PubMed:27374406, PubMed:27692771). As part of the PfRH5 adhesion complex, facilitates the interaction of RH5 and human BSG required for the Ca(2+) release into the erythrocyte (PubMed:27374406).</text>
</comment>
<comment type="subunit">
    <text evidence="3 4 5 7 8">Component of the PfRH5 adhesion complex composed of 1 copy of CyRPA, RH5 and RIPR; the complex is formed during merozoite invasion of host erythrocytes specifically at the interface between the parasite and host membranes (PubMed:21909261, PubMed:25583518, PubMed:27374406, PubMed:28186186, PubMed:30542156). Within the complex, interacts with CyRPA (PubMed:28186186, PubMed:30542156). CyRPA recruitment of RIPR to RH5-P113-BSG leads to the formation of the PfRH5 adhesion complex which probably in turn releases RH5 from P113 while maintaining the interaction of the PfRH5 adhesion complex with BSG (PubMed:28186186).</text>
</comment>
<comment type="subcellular location">
    <subcellularLocation>
        <location evidence="3 4">Secreted</location>
    </subcellularLocation>
    <subcellularLocation>
        <location evidence="3 4 5 6">Cytoplasmic vesicle</location>
        <location evidence="3 4 5 6">Secretory vesicle</location>
        <location evidence="3 4 5 6">Microneme lumen</location>
    </subcellularLocation>
    <subcellularLocation>
        <location evidence="3 4 5">Cell membrane</location>
        <topology evidence="3 4 5">Peripheral membrane protein</topology>
        <orientation evidence="3 4 5">Extracellular side</orientation>
    </subcellularLocation>
    <subcellularLocation>
        <location evidence="8">Host cell membrane</location>
    </subcellularLocation>
    <text evidence="3 4 5 6">In late schizonts, colocalizes with CyRPA in the microneme lumen (PubMed:21909261, PubMed:25583518, PubMed:27374406, PubMed:27692771). During merozoite invasion of host erythrocytes, secreted at the merozoite apical surface where it colocalizes with CyPRA and RH5 at the interface between the merozoite and the erythrocyte (PubMed:21909261, PubMed:25583518, PubMed:27374406).</text>
</comment>
<comment type="developmental stage">
    <text evidence="3 4 5 6">Expressed in late throphozoide to schizonts and in merozoites (at protein level).</text>
</comment>
<comment type="PTM">
    <text evidence="3">Proteolytically cleaved into two chains of 125kDa and 65kDa which remain associated. The cleavage occurs at the schizont stage prior to the release of merozoites.</text>
</comment>
<comment type="PTM">
    <text evidence="3">Contains disulfide bonds.</text>
</comment>
<comment type="disruption phenotype">
    <text evidence="5">Conditional knockdown causes loss of cell growth and severely impairs merozoite invasion of erythrocytes. Attachment to and deformation of erythrocyte membrane is normal, however the subsequent step, which triggers an increase in Ca(2+) from the attached merozoite into the erythrocyte, is impaired.</text>
</comment>
<comment type="biotechnology">
    <text evidence="4 6">Potential candidate for the development of parasite blood stage vaccines. In vitro and in vivo, induces neutralizing antibodies capable of inhibiting merozoite invasion of host erythrocytes.</text>
</comment>
<proteinExistence type="evidence at protein level"/>
<gene>
    <name type="primary">RIPR</name>
    <name evidence="9" type="synonym">PFC1045C</name>
    <name evidence="11" type="ORF">PF3D7_0323400</name>
</gene>
<protein>
    <recommendedName>
        <fullName evidence="9">Rh5-interacting protein</fullName>
        <shortName evidence="9">PfRipr</shortName>
    </recommendedName>
</protein>
<sequence length="1086" mass="125893">MFRIFFTLLIIILIKKTSAIDLIEGIFYEKNEIDKLTFSLDHRVRDNLKTDLILNNNGENDYAYLNKYVYTILNRDSTEKIKTFFSHNKDMKSCDYFISKEYNSSDKTNQICYKKTFCGVVIPNSEEIKTNKITNDKLYCAHFNSTHIIIYYISQPLLLEPHVVYEETFFEKGKNDQINCQGMYISLRSVHVHTHNAILQQETLTYIKNLCDGKNNCKFDFDSIKYENKSLTHYLFFINIQYQCISPLNLQENEMCDVYNDDTHKATCKYGFNKIELLKNVCEENYRCTQDICSVNQFCDGENETCTCKTSLLPSAKNNCEYNDLCTVLNCPENSTCEQIGNGKKAECKCENGKYYHNNKCYTKNDLELAIKIEPHKKEKFYKNNLYQGKALKPEYIFMQCENGFSIEVINAYVSCYRVSFNLNKLKYVTESLKKMCDGKTKCAYGNTIDPIDDLNHHNICNNFNTIFKYDYLCVFNNQNITSDKNSHLHSNIPSLYNSSILPDINKSKFHLISRNSRTNQYPHNNISMLEIQNEISSHNSNQFSTDPHTNSNNINNMNIKKVEIFRSRFSSKLQCQGGKINIDKAILKGGEGCNDLLLTNSLKSYCNDLSECDIGLIYHFDTYCINDQYLFVSYSCSNLCNKCHNNSTCYGNRFNYDCFCDNPYISKYGNKLCERPNDCESVLCSQNQVCQILPNDKLICQCEEGYKNVKGKCVPDNKCDLSCPSNKVCVIENGKQTCKCSERFVLENGVCICANDYKMEDGINCIAKNKCKRKEYENICTNPNEMCAYNEETDIVKCECKEHYYRSSRGECILNDYCKDINCKENEECSIVNFKPECVCKENLKKNNKGECIYENSCLINEGNCPKDSKCIYREYKPHECVCNKQGHVAVNGKCVLEDKCVHNKKCSENSICVNVMNKEPICVCTYNYYKKDGVCLIQNPCLKDNGGCSRNSECTFKYSKINCTCKENYKNKDDSCVPNTNEYDESFTFQYNDDASIILGACGMIEFSYIYNQIIWKINNSKESYVFYYDYPTAGNIEVQIKNEIFHTIIYLKKKIGNSVIYDDFQVDHQTCIYENVFYYSNQN</sequence>
<dbReference type="EMBL" id="AL844502">
    <property type="protein sequence ID" value="CAB39049.1"/>
    <property type="molecule type" value="Genomic_DNA"/>
</dbReference>
<dbReference type="RefSeq" id="XP_001351305.1">
    <property type="nucleotide sequence ID" value="XM_001351269.1"/>
</dbReference>
<dbReference type="PDB" id="8CDD">
    <property type="method" value="EM"/>
    <property type="resolution" value="3.00 A"/>
    <property type="chains" value="A=21-1086"/>
</dbReference>
<dbReference type="PDB" id="8CDE">
    <property type="method" value="EM"/>
    <property type="resolution" value="3.10 A"/>
    <property type="chains" value="A=21-1086"/>
</dbReference>
<dbReference type="PDBsum" id="8CDD"/>
<dbReference type="PDBsum" id="8CDE"/>
<dbReference type="EMDB" id="EMD-16569"/>
<dbReference type="EMDB" id="EMD-16570"/>
<dbReference type="SMR" id="O97302"/>
<dbReference type="FunCoup" id="O97302">
    <property type="interactions" value="637"/>
</dbReference>
<dbReference type="IntAct" id="O97302">
    <property type="interactions" value="3"/>
</dbReference>
<dbReference type="STRING" id="36329.O97302"/>
<dbReference type="GlyCosmos" id="O97302">
    <property type="glycosylation" value="12 sites, No reported glycans"/>
</dbReference>
<dbReference type="PaxDb" id="5833-PFC1045c"/>
<dbReference type="EnsemblProtists" id="CAB39049">
    <property type="protein sequence ID" value="CAB39049"/>
    <property type="gene ID" value="PF3D7_0323400"/>
</dbReference>
<dbReference type="GeneID" id="814549"/>
<dbReference type="KEGG" id="pfa:PF3D7_0323400"/>
<dbReference type="VEuPathDB" id="PlasmoDB:PF3D7_0323400"/>
<dbReference type="HOGENOM" id="CLU_285371_0_0_1"/>
<dbReference type="InParanoid" id="O97302"/>
<dbReference type="OMA" id="CECKENL"/>
<dbReference type="OrthoDB" id="4405280at2759"/>
<dbReference type="PhylomeDB" id="O97302"/>
<dbReference type="Proteomes" id="UP000001450">
    <property type="component" value="Chromosome 3"/>
</dbReference>
<dbReference type="GO" id="GO:0031410">
    <property type="term" value="C:cytoplasmic vesicle"/>
    <property type="evidence" value="ECO:0007669"/>
    <property type="project" value="UniProtKB-KW"/>
</dbReference>
<dbReference type="GO" id="GO:0005576">
    <property type="term" value="C:extracellular region"/>
    <property type="evidence" value="ECO:0007669"/>
    <property type="project" value="UniProtKB-SubCell"/>
</dbReference>
<dbReference type="GO" id="GO:0033644">
    <property type="term" value="C:host cell membrane"/>
    <property type="evidence" value="ECO:0000314"/>
    <property type="project" value="UniProtKB"/>
</dbReference>
<dbReference type="GO" id="GO:0020002">
    <property type="term" value="C:host cell plasma membrane"/>
    <property type="evidence" value="ECO:0007669"/>
    <property type="project" value="UniProtKB-SubCell"/>
</dbReference>
<dbReference type="GO" id="GO:0043655">
    <property type="term" value="C:host extracellular space"/>
    <property type="evidence" value="ECO:0000314"/>
    <property type="project" value="UniProtKB"/>
</dbReference>
<dbReference type="GO" id="GO:0016020">
    <property type="term" value="C:membrane"/>
    <property type="evidence" value="ECO:0000314"/>
    <property type="project" value="GeneDB"/>
</dbReference>
<dbReference type="GO" id="GO:0020009">
    <property type="term" value="C:microneme"/>
    <property type="evidence" value="ECO:0000314"/>
    <property type="project" value="UniProtKB"/>
</dbReference>
<dbReference type="GO" id="GO:0034494">
    <property type="term" value="C:microneme lumen"/>
    <property type="evidence" value="ECO:0000314"/>
    <property type="project" value="UniProtKB"/>
</dbReference>
<dbReference type="GO" id="GO:0005886">
    <property type="term" value="C:plasma membrane"/>
    <property type="evidence" value="ECO:0007669"/>
    <property type="project" value="UniProtKB-SubCell"/>
</dbReference>
<dbReference type="GO" id="GO:0032991">
    <property type="term" value="C:protein-containing complex"/>
    <property type="evidence" value="ECO:0000314"/>
    <property type="project" value="UniProtKB"/>
</dbReference>
<dbReference type="GO" id="GO:0044409">
    <property type="term" value="P:symbiont entry into host"/>
    <property type="evidence" value="ECO:0000314"/>
    <property type="project" value="UniProtKB"/>
</dbReference>
<dbReference type="Gene3D" id="2.90.20.10">
    <property type="entry name" value="Plasmodium vivax P25 domain"/>
    <property type="match status" value="2"/>
</dbReference>
<dbReference type="InterPro" id="IPR000742">
    <property type="entry name" value="EGF-like_dom"/>
</dbReference>
<dbReference type="PANTHER" id="PTHR24038:SF11">
    <property type="entry name" value="INTEGRIN BETA-LIKE PROTEIN E"/>
    <property type="match status" value="1"/>
</dbReference>
<dbReference type="PANTHER" id="PTHR24038">
    <property type="entry name" value="STABILIN"/>
    <property type="match status" value="1"/>
</dbReference>
<dbReference type="SMART" id="SM00181">
    <property type="entry name" value="EGF"/>
    <property type="match status" value="9"/>
</dbReference>
<dbReference type="PROSITE" id="PS01186">
    <property type="entry name" value="EGF_2"/>
    <property type="match status" value="2"/>
</dbReference>
<reference evidence="12" key="1">
    <citation type="journal article" date="1999" name="Nature">
        <title>The complete nucleotide sequence of chromosome 3 of Plasmodium falciparum.</title>
        <authorList>
            <person name="Bowman S."/>
            <person name="Lawson D."/>
            <person name="Basham D."/>
            <person name="Brown D."/>
            <person name="Chillingworth T."/>
            <person name="Churcher C.M."/>
            <person name="Craig A."/>
            <person name="Davies R.M."/>
            <person name="Devlin K."/>
            <person name="Feltwell T."/>
            <person name="Gentles S."/>
            <person name="Gwilliam R."/>
            <person name="Hamlin N."/>
            <person name="Harris D."/>
            <person name="Holroyd S."/>
            <person name="Hornsby T."/>
            <person name="Horrocks P."/>
            <person name="Jagels K."/>
            <person name="Jassal B."/>
            <person name="Kyes S."/>
            <person name="McLean J."/>
            <person name="Moule S."/>
            <person name="Mungall K.L."/>
            <person name="Murphy L."/>
            <person name="Oliver K."/>
            <person name="Quail M.A."/>
            <person name="Rajandream M.A."/>
            <person name="Rutter S."/>
            <person name="Skelton J."/>
            <person name="Squares R."/>
            <person name="Squares S."/>
            <person name="Sulston J.E."/>
            <person name="Whitehead S."/>
            <person name="Woodward J.R."/>
            <person name="Newbold C."/>
            <person name="Barrell B.G."/>
        </authorList>
    </citation>
    <scope>NUCLEOTIDE SEQUENCE [LARGE SCALE GENOMIC DNA]</scope>
    <source>
        <strain evidence="12">3D7</strain>
    </source>
</reference>
<reference evidence="12" key="2">
    <citation type="journal article" date="2002" name="Nature">
        <title>Genome sequence of the human malaria parasite Plasmodium falciparum.</title>
        <authorList>
            <person name="Gardner M.J."/>
            <person name="Hall N."/>
            <person name="Fung E."/>
            <person name="White O."/>
            <person name="Berriman M."/>
            <person name="Hyman R.W."/>
            <person name="Carlton J.M."/>
            <person name="Pain A."/>
            <person name="Nelson K.E."/>
            <person name="Bowman S."/>
            <person name="Paulsen I.T."/>
            <person name="James K.D."/>
            <person name="Eisen J.A."/>
            <person name="Rutherford K.M."/>
            <person name="Salzberg S.L."/>
            <person name="Craig A."/>
            <person name="Kyes S."/>
            <person name="Chan M.-S."/>
            <person name="Nene V."/>
            <person name="Shallom S.J."/>
            <person name="Suh B."/>
            <person name="Peterson J."/>
            <person name="Angiuoli S."/>
            <person name="Pertea M."/>
            <person name="Allen J."/>
            <person name="Selengut J."/>
            <person name="Haft D."/>
            <person name="Mather M.W."/>
            <person name="Vaidya A.B."/>
            <person name="Martin D.M.A."/>
            <person name="Fairlamb A.H."/>
            <person name="Fraunholz M.J."/>
            <person name="Roos D.S."/>
            <person name="Ralph S.A."/>
            <person name="McFadden G.I."/>
            <person name="Cummings L.M."/>
            <person name="Subramanian G.M."/>
            <person name="Mungall C."/>
            <person name="Venter J.C."/>
            <person name="Carucci D.J."/>
            <person name="Hoffman S.L."/>
            <person name="Newbold C."/>
            <person name="Davis R.W."/>
            <person name="Fraser C.M."/>
            <person name="Barrell B.G."/>
        </authorList>
    </citation>
    <scope>NUCLEOTIDE SEQUENCE [LARGE SCALE GENOMIC DNA]</scope>
    <source>
        <strain evidence="12">3D7</strain>
    </source>
</reference>
<reference evidence="12" key="3">
    <citation type="journal article" date="2002" name="Nature">
        <title>Sequence of Plasmodium falciparum chromosomes 1, 3-9 and 13.</title>
        <authorList>
            <person name="Hall N."/>
            <person name="Pain A."/>
            <person name="Berriman M."/>
            <person name="Churcher C.M."/>
            <person name="Harris B."/>
            <person name="Harris D."/>
            <person name="Mungall K.L."/>
            <person name="Bowman S."/>
            <person name="Atkin R."/>
            <person name="Baker S."/>
            <person name="Barron A."/>
            <person name="Brooks K."/>
            <person name="Buckee C.O."/>
            <person name="Burrows C."/>
            <person name="Cherevach I."/>
            <person name="Chillingworth C."/>
            <person name="Chillingworth T."/>
            <person name="Christodoulou Z."/>
            <person name="Clark L."/>
            <person name="Clark R."/>
            <person name="Corton C."/>
            <person name="Cronin A."/>
            <person name="Davies R.M."/>
            <person name="Davis P."/>
            <person name="Dear P."/>
            <person name="Dearden F."/>
            <person name="Doggett J."/>
            <person name="Feltwell T."/>
            <person name="Goble A."/>
            <person name="Goodhead I."/>
            <person name="Gwilliam R."/>
            <person name="Hamlin N."/>
            <person name="Hance Z."/>
            <person name="Harper D."/>
            <person name="Hauser H."/>
            <person name="Hornsby T."/>
            <person name="Holroyd S."/>
            <person name="Horrocks P."/>
            <person name="Humphray S."/>
            <person name="Jagels K."/>
            <person name="James K.D."/>
            <person name="Johnson D."/>
            <person name="Kerhornou A."/>
            <person name="Knights A."/>
            <person name="Konfortov B."/>
            <person name="Kyes S."/>
            <person name="Larke N."/>
            <person name="Lawson D."/>
            <person name="Lennard N."/>
            <person name="Line A."/>
            <person name="Maddison M."/>
            <person name="Mclean J."/>
            <person name="Mooney P."/>
            <person name="Moule S."/>
            <person name="Murphy L."/>
            <person name="Oliver K."/>
            <person name="Ormond D."/>
            <person name="Price C."/>
            <person name="Quail M.A."/>
            <person name="Rabbinowitsch E."/>
            <person name="Rajandream M.A."/>
            <person name="Rutter S."/>
            <person name="Rutherford K.M."/>
            <person name="Sanders M."/>
            <person name="Simmonds M."/>
            <person name="Seeger K."/>
            <person name="Sharp S."/>
            <person name="Smith R."/>
            <person name="Squares R."/>
            <person name="Squares S."/>
            <person name="Stevens K."/>
            <person name="Taylor K."/>
            <person name="Tivey A."/>
            <person name="Unwin L."/>
            <person name="Whitehead S."/>
            <person name="Woodward J.R."/>
            <person name="Sulston J.E."/>
            <person name="Craig A."/>
            <person name="Newbold C."/>
            <person name="Barrell B.G."/>
        </authorList>
    </citation>
    <scope>NUCLEOTIDE SEQUENCE [LARGE SCALE GENOMIC DNA]</scope>
    <source>
        <strain evidence="12">3D7</strain>
    </source>
</reference>
<reference evidence="10" key="4">
    <citation type="journal article" date="2011" name="PLoS Pathog.">
        <title>An EGF-like protein forms a complex with PfRh5 and is required for invasion of human erythrocytes by Plasmodium falciparum.</title>
        <authorList>
            <person name="Chen L."/>
            <person name="Lopaticki S."/>
            <person name="Riglar D.T."/>
            <person name="Dekiwadia C."/>
            <person name="Uboldi A.D."/>
            <person name="Tham W.H."/>
            <person name="O'Neill M.T."/>
            <person name="Richard D."/>
            <person name="Baum J."/>
            <person name="Ralph S.A."/>
            <person name="Cowman A.F."/>
        </authorList>
    </citation>
    <scope>FUNCTION</scope>
    <scope>IDENTIFICATION IN COMPLEX WITH RH5</scope>
    <scope>SUBCELLULAR LOCATION</scope>
    <scope>DEVELOPMENTAL STAGE</scope>
    <scope>IDENTIFICATION BY MASS SPECTROMETRY</scope>
    <scope>DISULFIDE BONDS</scope>
    <scope>PROTEOLYTIC CLEAVAGE</scope>
</reference>
<reference evidence="10" key="5">
    <citation type="journal article" date="2015" name="Proc. Natl. Acad. Sci. U.S.A.">
        <title>Multiprotein complex between the GPI-anchored CyRPA with PfRH5 and PfRipr is crucial for Plasmodium falciparum erythrocyte invasion.</title>
        <authorList>
            <person name="Reddy K.S."/>
            <person name="Amlabu E."/>
            <person name="Pandey A.K."/>
            <person name="Mitra P."/>
            <person name="Chauhan V.S."/>
            <person name="Gaur D."/>
        </authorList>
    </citation>
    <scope>FUNCTION</scope>
    <scope>IDENTIFICATION IN THE PFRH5 ADHESION COMPLEX</scope>
    <scope>SUBCELLULAR LOCATION</scope>
    <scope>DEVELOPMENTAL STAGE</scope>
    <scope>IDENTIFICATION BY MASS SPECTROMETRY</scope>
    <scope>BIOTECHNOLOGY</scope>
</reference>
<reference evidence="10" key="6">
    <citation type="journal article" date="2016" name="Cell Host Microbe">
        <title>Essential Role of the PfRh5/PfRipr/CyRPA Complex during Plasmodium falciparum Invasion of Erythrocytes.</title>
        <authorList>
            <person name="Volz J.C."/>
            <person name="Yap A."/>
            <person name="Sisquella X."/>
            <person name="Thompson J.K."/>
            <person name="Lim N.T."/>
            <person name="Whitehead L.W."/>
            <person name="Chen L."/>
            <person name="Lampe M."/>
            <person name="Tham W.H."/>
            <person name="Wilson D."/>
            <person name="Nebl T."/>
            <person name="Marapana D."/>
            <person name="Triglia T."/>
            <person name="Wong W."/>
            <person name="Rogers K.L."/>
            <person name="Cowman A.F."/>
        </authorList>
    </citation>
    <scope>FUNCTION</scope>
    <scope>IDENTIFICATION IN THE PFRH5 ADHESION COMPLEX</scope>
    <scope>SUBCELLULAR LOCATION</scope>
    <scope>DEVELOPMENTAL STAGE</scope>
    <scope>DISRUPTION PHENOTYPE</scope>
</reference>
<reference evidence="10" key="7">
    <citation type="journal article" date="2016" name="Vaccine">
        <title>Identification of Plasmodium falciparum reticulocyte binding protein homologue 5-interacting protein, PfRipr, as a highly conserved blood-stage malaria vaccine candidate.</title>
        <authorList>
            <person name="Ntege E.H."/>
            <person name="Arisue N."/>
            <person name="Ito D."/>
            <person name="Hasegawa T."/>
            <person name="Palacpac N.M.Q."/>
            <person name="Egwang T.G."/>
            <person name="Horii T."/>
            <person name="Takashima E."/>
            <person name="Tsuboi T."/>
        </authorList>
    </citation>
    <scope>FUNCTION</scope>
    <scope>SUBCELLULAR LOCATION</scope>
    <scope>DEVELOPMENTAL STAGE</scope>
    <scope>BIOTECHNOLOGY</scope>
</reference>
<reference evidence="10" key="8">
    <citation type="journal article" date="2017" name="Nat. Commun.">
        <title>P113 is a merozoite surface protein that binds the N terminus of Plasmodium falciparum RH5.</title>
        <authorList>
            <person name="Galaway F."/>
            <person name="Drought L.G."/>
            <person name="Fala M."/>
            <person name="Cross N."/>
            <person name="Kemp A.C."/>
            <person name="Rayner J.C."/>
            <person name="Wright G.J."/>
        </authorList>
    </citation>
    <scope>IDENTIFICATION IN THE PFRH5 ADHESION COMPLEX</scope>
</reference>
<reference evidence="10" key="9">
    <citation type="journal article" date="2019" name="Nature">
        <title>Structure of Plasmodium falciparum Rh5-CyRPA-Ripr invasion complex.</title>
        <authorList>
            <person name="Wong W."/>
            <person name="Huang R."/>
            <person name="Menant S."/>
            <person name="Hong C."/>
            <person name="Sandow J.J."/>
            <person name="Birkinshaw R.W."/>
            <person name="Healer J."/>
            <person name="Hodder A.N."/>
            <person name="Kanjee U."/>
            <person name="Tonkin C.J."/>
            <person name="Heckmann D."/>
            <person name="Soroka V."/>
            <person name="Sogaard T.M.M."/>
            <person name="Jorgensen T."/>
            <person name="Duraisingh M.T."/>
            <person name="Czabotar P.E."/>
            <person name="de Jongh W.A."/>
            <person name="Tham W.H."/>
            <person name="Webb A.I."/>
            <person name="Yu Z."/>
            <person name="Cowman A.F."/>
        </authorList>
    </citation>
    <scope>IDENTIFICATION IN THE PFRH5 ADHESION COMPLEX</scope>
</reference>
<keyword id="KW-0002">3D-structure</keyword>
<keyword id="KW-1003">Cell membrane</keyword>
<keyword id="KW-0968">Cytoplasmic vesicle</keyword>
<keyword id="KW-1015">Disulfide bond</keyword>
<keyword id="KW-0325">Glycoprotein</keyword>
<keyword id="KW-1032">Host cell membrane</keyword>
<keyword id="KW-1043">Host membrane</keyword>
<keyword id="KW-0472">Membrane</keyword>
<keyword id="KW-1185">Reference proteome</keyword>
<keyword id="KW-0964">Secreted</keyword>
<keyword id="KW-0732">Signal</keyword>
<evidence type="ECO:0000255" key="1"/>
<evidence type="ECO:0000255" key="2">
    <source>
        <dbReference type="PROSITE-ProRule" id="PRU00498"/>
    </source>
</evidence>
<evidence type="ECO:0000269" key="3">
    <source>
    </source>
</evidence>
<evidence type="ECO:0000269" key="4">
    <source>
    </source>
</evidence>
<evidence type="ECO:0000269" key="5">
    <source>
    </source>
</evidence>
<evidence type="ECO:0000269" key="6">
    <source>
    </source>
</evidence>
<evidence type="ECO:0000269" key="7">
    <source>
    </source>
</evidence>
<evidence type="ECO:0000269" key="8">
    <source>
    </source>
</evidence>
<evidence type="ECO:0000303" key="9">
    <source>
    </source>
</evidence>
<evidence type="ECO:0000305" key="10"/>
<evidence type="ECO:0000312" key="11">
    <source>
        <dbReference type="EMBL" id="CAB39049.1"/>
    </source>
</evidence>
<evidence type="ECO:0000312" key="12">
    <source>
        <dbReference type="Proteomes" id="UP000001450"/>
    </source>
</evidence>
<evidence type="ECO:0007829" key="13">
    <source>
        <dbReference type="PDB" id="8CDD"/>
    </source>
</evidence>
<evidence type="ECO:0007829" key="14">
    <source>
        <dbReference type="PDB" id="8CDE"/>
    </source>
</evidence>
<feature type="signal peptide" evidence="1">
    <location>
        <begin position="1"/>
        <end position="19"/>
    </location>
</feature>
<feature type="chain" id="PRO_5004160700" description="Rh5-interacting protein" evidence="1">
    <location>
        <begin position="20"/>
        <end position="1086"/>
    </location>
</feature>
<feature type="domain" description="EGF-like 1" evidence="1">
    <location>
        <begin position="287"/>
        <end position="321"/>
    </location>
</feature>
<feature type="domain" description="EGF-like 2" evidence="1">
    <location>
        <begin position="325"/>
        <end position="362"/>
    </location>
</feature>
<feature type="domain" description="EGF-like 3" evidence="1">
    <location>
        <begin position="636"/>
        <end position="675"/>
    </location>
</feature>
<feature type="domain" description="EGF-like 4" evidence="1">
    <location>
        <begin position="679"/>
        <end position="715"/>
    </location>
</feature>
<feature type="domain" description="EGF-like 5" evidence="1">
    <location>
        <begin position="719"/>
        <end position="753"/>
    </location>
</feature>
<feature type="domain" description="EGF-like 6" evidence="1">
    <location>
        <begin position="818"/>
        <end position="854"/>
    </location>
</feature>
<feature type="domain" description="EGF-like 7" evidence="1">
    <location>
        <begin position="858"/>
        <end position="897"/>
    </location>
</feature>
<feature type="domain" description="EGF-like 8" evidence="1">
    <location>
        <begin position="901"/>
        <end position="938"/>
    </location>
</feature>
<feature type="domain" description="EGF-like 9" evidence="1">
    <location>
        <begin position="942"/>
        <end position="979"/>
    </location>
</feature>
<feature type="glycosylation site" description="N-linked (GlcNAc...) asparagine" evidence="2">
    <location>
        <position position="103"/>
    </location>
</feature>
<feature type="glycosylation site" description="N-linked (GlcNAc...) asparagine" evidence="2">
    <location>
        <position position="144"/>
    </location>
</feature>
<feature type="glycosylation site" description="N-linked (GlcNAc...) asparagine" evidence="2">
    <location>
        <position position="228"/>
    </location>
</feature>
<feature type="glycosylation site" description="N-linked (GlcNAc...) asparagine" evidence="2">
    <location>
        <position position="303"/>
    </location>
</feature>
<feature type="glycosylation site" description="N-linked (GlcNAc...) asparagine" evidence="2">
    <location>
        <position position="334"/>
    </location>
</feature>
<feature type="glycosylation site" description="N-linked (GlcNAc...) asparagine" evidence="2">
    <location>
        <position position="480"/>
    </location>
</feature>
<feature type="glycosylation site" description="N-linked (GlcNAc...) asparagine" evidence="2">
    <location>
        <position position="498"/>
    </location>
</feature>
<feature type="glycosylation site" description="N-linked (GlcNAc...) asparagine" evidence="2">
    <location>
        <position position="506"/>
    </location>
</feature>
<feature type="glycosylation site" description="N-linked (GlcNAc...) asparagine" evidence="2">
    <location>
        <position position="526"/>
    </location>
</feature>
<feature type="glycosylation site" description="N-linked (GlcNAc...) asparagine" evidence="2">
    <location>
        <position position="646"/>
    </location>
</feature>
<feature type="glycosylation site" description="N-linked (GlcNAc...) asparagine" evidence="2">
    <location>
        <position position="964"/>
    </location>
</feature>
<feature type="glycosylation site" description="N-linked (GlcNAc...) asparagine" evidence="2">
    <location>
        <position position="1021"/>
    </location>
</feature>
<feature type="turn" evidence="13">
    <location>
        <begin position="43"/>
        <end position="46"/>
    </location>
</feature>
<feature type="strand" evidence="13">
    <location>
        <begin position="49"/>
        <end position="51"/>
    </location>
</feature>
<feature type="strand" evidence="13">
    <location>
        <begin position="62"/>
        <end position="76"/>
    </location>
</feature>
<feature type="helix" evidence="13">
    <location>
        <begin position="80"/>
        <end position="84"/>
    </location>
</feature>
<feature type="helix" evidence="13">
    <location>
        <begin position="85"/>
        <end position="87"/>
    </location>
</feature>
<feature type="helix" evidence="13">
    <location>
        <begin position="94"/>
        <end position="100"/>
    </location>
</feature>
<feature type="helix" evidence="13">
    <location>
        <begin position="111"/>
        <end position="114"/>
    </location>
</feature>
<feature type="strand" evidence="13">
    <location>
        <begin position="139"/>
        <end position="143"/>
    </location>
</feature>
<feature type="strand" evidence="13">
    <location>
        <begin position="145"/>
        <end position="153"/>
    </location>
</feature>
<feature type="strand" evidence="13">
    <location>
        <begin position="164"/>
        <end position="169"/>
    </location>
</feature>
<feature type="strand" evidence="14">
    <location>
        <begin position="177"/>
        <end position="179"/>
    </location>
</feature>
<feature type="strand" evidence="13">
    <location>
        <begin position="181"/>
        <end position="195"/>
    </location>
</feature>
<feature type="helix" evidence="13">
    <location>
        <begin position="197"/>
        <end position="210"/>
    </location>
</feature>
<feature type="strand" evidence="13">
    <location>
        <begin position="211"/>
        <end position="213"/>
    </location>
</feature>
<feature type="strand" evidence="14">
    <location>
        <begin position="221"/>
        <end position="223"/>
    </location>
</feature>
<feature type="strand" evidence="13">
    <location>
        <begin position="227"/>
        <end position="229"/>
    </location>
</feature>
<feature type="helix" evidence="13">
    <location>
        <begin position="231"/>
        <end position="233"/>
    </location>
</feature>
<feature type="strand" evidence="13">
    <location>
        <begin position="236"/>
        <end position="245"/>
    </location>
</feature>
<feature type="strand" evidence="13">
    <location>
        <begin position="252"/>
        <end position="254"/>
    </location>
</feature>
<feature type="strand" evidence="14">
    <location>
        <begin position="266"/>
        <end position="268"/>
    </location>
</feature>
<feature type="strand" evidence="13">
    <location>
        <begin position="276"/>
        <end position="278"/>
    </location>
</feature>
<feature type="strand" evidence="13">
    <location>
        <begin position="283"/>
        <end position="286"/>
    </location>
</feature>
<feature type="strand" evidence="13">
    <location>
        <begin position="288"/>
        <end position="290"/>
    </location>
</feature>
<feature type="turn" evidence="13">
    <location>
        <begin position="301"/>
        <end position="304"/>
    </location>
</feature>
<feature type="turn" evidence="13">
    <location>
        <begin position="310"/>
        <end position="312"/>
    </location>
</feature>
<feature type="strand" evidence="13">
    <location>
        <begin position="318"/>
        <end position="321"/>
    </location>
</feature>
<feature type="helix" evidence="13">
    <location>
        <begin position="325"/>
        <end position="328"/>
    </location>
</feature>
<feature type="strand" evidence="13">
    <location>
        <begin position="336"/>
        <end position="339"/>
    </location>
</feature>
<feature type="strand" evidence="13">
    <location>
        <begin position="344"/>
        <end position="349"/>
    </location>
</feature>
<feature type="strand" evidence="14">
    <location>
        <begin position="354"/>
        <end position="356"/>
    </location>
</feature>
<feature type="strand" evidence="13">
    <location>
        <begin position="357"/>
        <end position="360"/>
    </location>
</feature>
<feature type="helix" evidence="13">
    <location>
        <begin position="364"/>
        <end position="370"/>
    </location>
</feature>
<feature type="helix" evidence="13">
    <location>
        <begin position="371"/>
        <end position="373"/>
    </location>
</feature>
<feature type="strand" evidence="13">
    <location>
        <begin position="381"/>
        <end position="385"/>
    </location>
</feature>
<feature type="strand" evidence="13">
    <location>
        <begin position="387"/>
        <end position="393"/>
    </location>
</feature>
<feature type="helix" evidence="13">
    <location>
        <begin position="394"/>
        <end position="396"/>
    </location>
</feature>
<feature type="strand" evidence="13">
    <location>
        <begin position="398"/>
        <end position="400"/>
    </location>
</feature>
<feature type="strand" evidence="13">
    <location>
        <begin position="405"/>
        <end position="416"/>
    </location>
</feature>
<feature type="helix" evidence="14">
    <location>
        <begin position="421"/>
        <end position="423"/>
    </location>
</feature>
<feature type="strand" evidence="13">
    <location>
        <begin position="426"/>
        <end position="428"/>
    </location>
</feature>
<feature type="helix" evidence="13">
    <location>
        <begin position="430"/>
        <end position="434"/>
    </location>
</feature>
<feature type="strand" evidence="13">
    <location>
        <begin position="441"/>
        <end position="444"/>
    </location>
</feature>
<feature type="strand" evidence="13">
    <location>
        <begin position="448"/>
        <end position="450"/>
    </location>
</feature>
<feature type="helix" evidence="13">
    <location>
        <begin position="456"/>
        <end position="458"/>
    </location>
</feature>
<feature type="strand" evidence="13">
    <location>
        <begin position="461"/>
        <end position="464"/>
    </location>
</feature>
<feature type="strand" evidence="13">
    <location>
        <begin position="466"/>
        <end position="476"/>
    </location>
</feature>
<feature type="strand" evidence="13">
    <location>
        <begin position="560"/>
        <end position="566"/>
    </location>
</feature>
<feature type="strand" evidence="13">
    <location>
        <begin position="569"/>
        <end position="571"/>
    </location>
</feature>
<feature type="strand" evidence="13">
    <location>
        <begin position="579"/>
        <end position="590"/>
    </location>
</feature>
<feature type="helix" evidence="13">
    <location>
        <begin position="601"/>
        <end position="607"/>
    </location>
</feature>
<feature type="strand" evidence="14">
    <location>
        <begin position="611"/>
        <end position="613"/>
    </location>
</feature>
<feature type="helix" evidence="13">
    <location>
        <begin position="615"/>
        <end position="618"/>
    </location>
</feature>
<feature type="helix" evidence="14">
    <location>
        <begin position="621"/>
        <end position="623"/>
    </location>
</feature>
<feature type="strand" evidence="13">
    <location>
        <begin position="624"/>
        <end position="627"/>
    </location>
</feature>
<feature type="strand" evidence="13">
    <location>
        <begin position="629"/>
        <end position="641"/>
    </location>
</feature>
<feature type="strand" evidence="13">
    <location>
        <begin position="649"/>
        <end position="652"/>
    </location>
</feature>
<feature type="strand" evidence="13">
    <location>
        <begin position="654"/>
        <end position="660"/>
    </location>
</feature>
<feature type="turn" evidence="14">
    <location>
        <begin position="668"/>
        <end position="671"/>
    </location>
</feature>
<feature type="helix" evidence="13">
    <location>
        <begin position="680"/>
        <end position="682"/>
    </location>
</feature>
<feature type="strand" evidence="13">
    <location>
        <begin position="689"/>
        <end position="694"/>
    </location>
</feature>
<feature type="turn" evidence="13">
    <location>
        <begin position="695"/>
        <end position="697"/>
    </location>
</feature>
<feature type="strand" evidence="13">
    <location>
        <begin position="698"/>
        <end position="703"/>
    </location>
</feature>
<feature type="strand" evidence="13">
    <location>
        <begin position="708"/>
        <end position="710"/>
    </location>
</feature>
<feature type="strand" evidence="13">
    <location>
        <begin position="713"/>
        <end position="715"/>
    </location>
</feature>
<name>RH5IP_PLAF7</name>
<organism evidence="12">
    <name type="scientific">Plasmodium falciparum (isolate 3D7)</name>
    <dbReference type="NCBI Taxonomy" id="36329"/>
    <lineage>
        <taxon>Eukaryota</taxon>
        <taxon>Sar</taxon>
        <taxon>Alveolata</taxon>
        <taxon>Apicomplexa</taxon>
        <taxon>Aconoidasida</taxon>
        <taxon>Haemosporida</taxon>
        <taxon>Plasmodiidae</taxon>
        <taxon>Plasmodium</taxon>
        <taxon>Plasmodium (Laverania)</taxon>
    </lineage>
</organism>
<accession>O97302</accession>